<evidence type="ECO:0000255" key="1">
    <source>
        <dbReference type="HAMAP-Rule" id="MF_01210"/>
    </source>
</evidence>
<sequence length="1072" mass="119001">MPKYKDISKVLVIGSGPIIIGQAAEFDYSGTQACKSLKEEGVQVVLVNNNPATIMTDTDIADIVYIENPTVEVVEKIIAKERPDGILATLGGQTGLNLAVKLKEAGILDKYNVKLLGTSVESIKTAEDRELFKRKMQEIGEPVAESVTVTNVEDALKFAKNYGYPLIIRPAYTLGGTGGGIAHNDEELISIVDLGLKKSMVGEVLVEKSLYGWKEIEFEVMRDAADNCITICSMENFDPVGVHTGDSIVVAPAQTLSDYEYQMLRSASIKIIRALKIEGGCNIQFALDPQSHKYYVIEVNPRVSRSSALASKATGYPIAKIAAKIAIGLRLDEIKNPVTGKTTAFFEPALDYVVTKIPRWPFDKFYTTDRRIGTQMKATGEVMAIERSFEASLLKAVRSLEIKAYGLRLDSVRGMGTKEILEDISVPNDMRLFYIAEALRRNIDIDYINDVTKIDKWFLNKLSNIVNMEKEIEENELSKEILKKAKRMGFSDREIATIKGIKEEDVRTLRKKYGIYPSYKMVDTCAAEFESITQYIYSTYCEEDEVETHDIPKVIVIGSGPIRIGQGIEFDYCSVKALWALKETGIKSIIINNNPETVSTDFDTGDRLYFEPITLEDVLNIYEKEKPLGVMVMFGGQTAINLTEELVKNEVKILGTSFKSIDISEDREKFSKLLKELNINQPKGGYALTVEDAKDIALKLGFPLLVRPSYVIGGQSMEKVNTLQELIDYVKHATEVSPGKPVLIDKYIDGREVEVDAVSDGECVLIPGIMEHIERTGVHSGDSFSIYPARNLTEREINTIIEYTEKISKALNVKGLINIQFAVKEGTVYVLEVNPRASRTVPIMSKATGVPMVKLAVEVALGKKLKELGYKGGLWPQTPYTVVKAPVFSMEKLTDVEVSLSPEMKSTGEIMGIDLSYEGALYKALEGAGLKIPKKGKILLSIAERDFQEAVSLVEKLQSLGYEIYATYRTGKYFSLMGIHANIMSLDHAIKLLKNGYFDAVVNTPTKGKKPDNAGFKLRRTAVEYRIPLFTSIDTIKAALNAVSKVNVNGLSVLSMNEYQEIQKDNVKNLVL</sequence>
<feature type="chain" id="PRO_0000145060" description="Carbamoyl phosphate synthase large chain">
    <location>
        <begin position="1"/>
        <end position="1072"/>
    </location>
</feature>
<feature type="domain" description="ATP-grasp 1" evidence="1">
    <location>
        <begin position="133"/>
        <end position="327"/>
    </location>
</feature>
<feature type="domain" description="ATP-grasp 2" evidence="1">
    <location>
        <begin position="671"/>
        <end position="861"/>
    </location>
</feature>
<feature type="domain" description="MGS-like" evidence="1">
    <location>
        <begin position="930"/>
        <end position="1072"/>
    </location>
</feature>
<feature type="region of interest" description="Carboxyphosphate synthetic domain" evidence="1">
    <location>
        <begin position="1"/>
        <end position="401"/>
    </location>
</feature>
<feature type="region of interest" description="Oligomerization domain" evidence="1">
    <location>
        <begin position="402"/>
        <end position="544"/>
    </location>
</feature>
<feature type="region of interest" description="Carbamoyl phosphate synthetic domain" evidence="1">
    <location>
        <begin position="545"/>
        <end position="929"/>
    </location>
</feature>
<feature type="region of interest" description="Allosteric domain" evidence="1">
    <location>
        <begin position="930"/>
        <end position="1072"/>
    </location>
</feature>
<feature type="binding site" evidence="1">
    <location>
        <position position="129"/>
    </location>
    <ligand>
        <name>ATP</name>
        <dbReference type="ChEBI" id="CHEBI:30616"/>
        <label>1</label>
    </ligand>
</feature>
<feature type="binding site" evidence="1">
    <location>
        <position position="169"/>
    </location>
    <ligand>
        <name>ATP</name>
        <dbReference type="ChEBI" id="CHEBI:30616"/>
        <label>1</label>
    </ligand>
</feature>
<feature type="binding site" evidence="1">
    <location>
        <position position="175"/>
    </location>
    <ligand>
        <name>ATP</name>
        <dbReference type="ChEBI" id="CHEBI:30616"/>
        <label>1</label>
    </ligand>
</feature>
<feature type="binding site" evidence="1">
    <location>
        <position position="176"/>
    </location>
    <ligand>
        <name>ATP</name>
        <dbReference type="ChEBI" id="CHEBI:30616"/>
        <label>1</label>
    </ligand>
</feature>
<feature type="binding site" evidence="1">
    <location>
        <position position="208"/>
    </location>
    <ligand>
        <name>ATP</name>
        <dbReference type="ChEBI" id="CHEBI:30616"/>
        <label>1</label>
    </ligand>
</feature>
<feature type="binding site" evidence="1">
    <location>
        <position position="210"/>
    </location>
    <ligand>
        <name>ATP</name>
        <dbReference type="ChEBI" id="CHEBI:30616"/>
        <label>1</label>
    </ligand>
</feature>
<feature type="binding site" evidence="1">
    <location>
        <position position="215"/>
    </location>
    <ligand>
        <name>ATP</name>
        <dbReference type="ChEBI" id="CHEBI:30616"/>
        <label>1</label>
    </ligand>
</feature>
<feature type="binding site" evidence="1">
    <location>
        <position position="241"/>
    </location>
    <ligand>
        <name>ATP</name>
        <dbReference type="ChEBI" id="CHEBI:30616"/>
        <label>1</label>
    </ligand>
</feature>
<feature type="binding site" evidence="1">
    <location>
        <position position="242"/>
    </location>
    <ligand>
        <name>ATP</name>
        <dbReference type="ChEBI" id="CHEBI:30616"/>
        <label>1</label>
    </ligand>
</feature>
<feature type="binding site" evidence="1">
    <location>
        <position position="243"/>
    </location>
    <ligand>
        <name>ATP</name>
        <dbReference type="ChEBI" id="CHEBI:30616"/>
        <label>1</label>
    </ligand>
</feature>
<feature type="binding site" evidence="1">
    <location>
        <position position="284"/>
    </location>
    <ligand>
        <name>ATP</name>
        <dbReference type="ChEBI" id="CHEBI:30616"/>
        <label>1</label>
    </ligand>
</feature>
<feature type="binding site" evidence="1">
    <location>
        <position position="284"/>
    </location>
    <ligand>
        <name>Mg(2+)</name>
        <dbReference type="ChEBI" id="CHEBI:18420"/>
        <label>1</label>
    </ligand>
</feature>
<feature type="binding site" evidence="1">
    <location>
        <position position="284"/>
    </location>
    <ligand>
        <name>Mn(2+)</name>
        <dbReference type="ChEBI" id="CHEBI:29035"/>
        <label>1</label>
    </ligand>
</feature>
<feature type="binding site" evidence="1">
    <location>
        <position position="298"/>
    </location>
    <ligand>
        <name>ATP</name>
        <dbReference type="ChEBI" id="CHEBI:30616"/>
        <label>1</label>
    </ligand>
</feature>
<feature type="binding site" evidence="1">
    <location>
        <position position="298"/>
    </location>
    <ligand>
        <name>Mg(2+)</name>
        <dbReference type="ChEBI" id="CHEBI:18420"/>
        <label>1</label>
    </ligand>
</feature>
<feature type="binding site" evidence="1">
    <location>
        <position position="298"/>
    </location>
    <ligand>
        <name>Mg(2+)</name>
        <dbReference type="ChEBI" id="CHEBI:18420"/>
        <label>2</label>
    </ligand>
</feature>
<feature type="binding site" evidence="1">
    <location>
        <position position="298"/>
    </location>
    <ligand>
        <name>Mn(2+)</name>
        <dbReference type="ChEBI" id="CHEBI:29035"/>
        <label>1</label>
    </ligand>
</feature>
<feature type="binding site" evidence="1">
    <location>
        <position position="298"/>
    </location>
    <ligand>
        <name>Mn(2+)</name>
        <dbReference type="ChEBI" id="CHEBI:29035"/>
        <label>2</label>
    </ligand>
</feature>
<feature type="binding site" evidence="1">
    <location>
        <position position="300"/>
    </location>
    <ligand>
        <name>Mg(2+)</name>
        <dbReference type="ChEBI" id="CHEBI:18420"/>
        <label>2</label>
    </ligand>
</feature>
<feature type="binding site" evidence="1">
    <location>
        <position position="300"/>
    </location>
    <ligand>
        <name>Mn(2+)</name>
        <dbReference type="ChEBI" id="CHEBI:29035"/>
        <label>2</label>
    </ligand>
</feature>
<feature type="binding site" evidence="1">
    <location>
        <position position="707"/>
    </location>
    <ligand>
        <name>ATP</name>
        <dbReference type="ChEBI" id="CHEBI:30616"/>
        <label>2</label>
    </ligand>
</feature>
<feature type="binding site" evidence="1">
    <location>
        <position position="746"/>
    </location>
    <ligand>
        <name>ATP</name>
        <dbReference type="ChEBI" id="CHEBI:30616"/>
        <label>2</label>
    </ligand>
</feature>
<feature type="binding site" evidence="1">
    <location>
        <position position="748"/>
    </location>
    <ligand>
        <name>ATP</name>
        <dbReference type="ChEBI" id="CHEBI:30616"/>
        <label>2</label>
    </ligand>
</feature>
<feature type="binding site" evidence="1">
    <location>
        <position position="752"/>
    </location>
    <ligand>
        <name>ATP</name>
        <dbReference type="ChEBI" id="CHEBI:30616"/>
        <label>2</label>
    </ligand>
</feature>
<feature type="binding site" evidence="1">
    <location>
        <position position="777"/>
    </location>
    <ligand>
        <name>ATP</name>
        <dbReference type="ChEBI" id="CHEBI:30616"/>
        <label>2</label>
    </ligand>
</feature>
<feature type="binding site" evidence="1">
    <location>
        <position position="778"/>
    </location>
    <ligand>
        <name>ATP</name>
        <dbReference type="ChEBI" id="CHEBI:30616"/>
        <label>2</label>
    </ligand>
</feature>
<feature type="binding site" evidence="1">
    <location>
        <position position="779"/>
    </location>
    <ligand>
        <name>ATP</name>
        <dbReference type="ChEBI" id="CHEBI:30616"/>
        <label>2</label>
    </ligand>
</feature>
<feature type="binding site" evidence="1">
    <location>
        <position position="780"/>
    </location>
    <ligand>
        <name>ATP</name>
        <dbReference type="ChEBI" id="CHEBI:30616"/>
        <label>2</label>
    </ligand>
</feature>
<feature type="binding site" evidence="1">
    <location>
        <position position="820"/>
    </location>
    <ligand>
        <name>ATP</name>
        <dbReference type="ChEBI" id="CHEBI:30616"/>
        <label>2</label>
    </ligand>
</feature>
<feature type="binding site" evidence="1">
    <location>
        <position position="820"/>
    </location>
    <ligand>
        <name>Mg(2+)</name>
        <dbReference type="ChEBI" id="CHEBI:18420"/>
        <label>3</label>
    </ligand>
</feature>
<feature type="binding site" evidence="1">
    <location>
        <position position="820"/>
    </location>
    <ligand>
        <name>Mn(2+)</name>
        <dbReference type="ChEBI" id="CHEBI:29035"/>
        <label>3</label>
    </ligand>
</feature>
<feature type="binding site" evidence="1">
    <location>
        <position position="832"/>
    </location>
    <ligand>
        <name>ATP</name>
        <dbReference type="ChEBI" id="CHEBI:30616"/>
        <label>2</label>
    </ligand>
</feature>
<feature type="binding site" evidence="1">
    <location>
        <position position="832"/>
    </location>
    <ligand>
        <name>Mg(2+)</name>
        <dbReference type="ChEBI" id="CHEBI:18420"/>
        <label>3</label>
    </ligand>
</feature>
<feature type="binding site" evidence="1">
    <location>
        <position position="832"/>
    </location>
    <ligand>
        <name>Mg(2+)</name>
        <dbReference type="ChEBI" id="CHEBI:18420"/>
        <label>4</label>
    </ligand>
</feature>
<feature type="binding site" evidence="1">
    <location>
        <position position="832"/>
    </location>
    <ligand>
        <name>Mn(2+)</name>
        <dbReference type="ChEBI" id="CHEBI:29035"/>
        <label>3</label>
    </ligand>
</feature>
<feature type="binding site" evidence="1">
    <location>
        <position position="832"/>
    </location>
    <ligand>
        <name>Mn(2+)</name>
        <dbReference type="ChEBI" id="CHEBI:29035"/>
        <label>4</label>
    </ligand>
</feature>
<feature type="binding site" evidence="1">
    <location>
        <position position="834"/>
    </location>
    <ligand>
        <name>Mg(2+)</name>
        <dbReference type="ChEBI" id="CHEBI:18420"/>
        <label>4</label>
    </ligand>
</feature>
<feature type="binding site" evidence="1">
    <location>
        <position position="834"/>
    </location>
    <ligand>
        <name>Mn(2+)</name>
        <dbReference type="ChEBI" id="CHEBI:29035"/>
        <label>4</label>
    </ligand>
</feature>
<keyword id="KW-0028">Amino-acid biosynthesis</keyword>
<keyword id="KW-0055">Arginine biosynthesis</keyword>
<keyword id="KW-0067">ATP-binding</keyword>
<keyword id="KW-0436">Ligase</keyword>
<keyword id="KW-0460">Magnesium</keyword>
<keyword id="KW-0464">Manganese</keyword>
<keyword id="KW-0479">Metal-binding</keyword>
<keyword id="KW-0547">Nucleotide-binding</keyword>
<keyword id="KW-0665">Pyrimidine biosynthesis</keyword>
<keyword id="KW-1185">Reference proteome</keyword>
<keyword id="KW-0677">Repeat</keyword>
<protein>
    <recommendedName>
        <fullName evidence="1">Carbamoyl phosphate synthase large chain</fullName>
        <ecNumber evidence="1">6.3.4.16</ecNumber>
        <ecNumber evidence="1">6.3.5.5</ecNumber>
    </recommendedName>
    <alternativeName>
        <fullName evidence="1">Carbamoyl phosphate synthetase ammonia chain</fullName>
    </alternativeName>
</protein>
<gene>
    <name evidence="1" type="primary">carB</name>
    <name type="ordered locus">TTE0816</name>
</gene>
<reference key="1">
    <citation type="journal article" date="2002" name="Genome Res.">
        <title>A complete sequence of the T. tengcongensis genome.</title>
        <authorList>
            <person name="Bao Q."/>
            <person name="Tian Y."/>
            <person name="Li W."/>
            <person name="Xu Z."/>
            <person name="Xuan Z."/>
            <person name="Hu S."/>
            <person name="Dong W."/>
            <person name="Yang J."/>
            <person name="Chen Y."/>
            <person name="Xue Y."/>
            <person name="Xu Y."/>
            <person name="Lai X."/>
            <person name="Huang L."/>
            <person name="Dong X."/>
            <person name="Ma Y."/>
            <person name="Ling L."/>
            <person name="Tan H."/>
            <person name="Chen R."/>
            <person name="Wang J."/>
            <person name="Yu J."/>
            <person name="Yang H."/>
        </authorList>
    </citation>
    <scope>NUCLEOTIDE SEQUENCE [LARGE SCALE GENOMIC DNA]</scope>
    <source>
        <strain>DSM 15242 / JCM 11007 / NBRC 100824 / MB4</strain>
    </source>
</reference>
<organism>
    <name type="scientific">Caldanaerobacter subterraneus subsp. tengcongensis (strain DSM 15242 / JCM 11007 / NBRC 100824 / MB4)</name>
    <name type="common">Thermoanaerobacter tengcongensis</name>
    <dbReference type="NCBI Taxonomy" id="273068"/>
    <lineage>
        <taxon>Bacteria</taxon>
        <taxon>Bacillati</taxon>
        <taxon>Bacillota</taxon>
        <taxon>Clostridia</taxon>
        <taxon>Thermoanaerobacterales</taxon>
        <taxon>Thermoanaerobacteraceae</taxon>
        <taxon>Caldanaerobacter</taxon>
    </lineage>
</organism>
<accession>Q8RBK0</accession>
<name>CARB_CALS4</name>
<dbReference type="EC" id="6.3.4.16" evidence="1"/>
<dbReference type="EC" id="6.3.5.5" evidence="1"/>
<dbReference type="EMBL" id="AE008691">
    <property type="protein sequence ID" value="AAM24073.1"/>
    <property type="molecule type" value="Genomic_DNA"/>
</dbReference>
<dbReference type="RefSeq" id="WP_011025209.1">
    <property type="nucleotide sequence ID" value="NC_003869.1"/>
</dbReference>
<dbReference type="SMR" id="Q8RBK0"/>
<dbReference type="STRING" id="273068.TTE0816"/>
<dbReference type="KEGG" id="tte:TTE0816"/>
<dbReference type="eggNOG" id="COG0458">
    <property type="taxonomic scope" value="Bacteria"/>
</dbReference>
<dbReference type="HOGENOM" id="CLU_000513_1_0_9"/>
<dbReference type="OrthoDB" id="9804197at2"/>
<dbReference type="UniPathway" id="UPA00068">
    <property type="reaction ID" value="UER00171"/>
</dbReference>
<dbReference type="UniPathway" id="UPA00070">
    <property type="reaction ID" value="UER00115"/>
</dbReference>
<dbReference type="Proteomes" id="UP000000555">
    <property type="component" value="Chromosome"/>
</dbReference>
<dbReference type="GO" id="GO:0005737">
    <property type="term" value="C:cytoplasm"/>
    <property type="evidence" value="ECO:0007669"/>
    <property type="project" value="TreeGrafter"/>
</dbReference>
<dbReference type="GO" id="GO:0005524">
    <property type="term" value="F:ATP binding"/>
    <property type="evidence" value="ECO:0007669"/>
    <property type="project" value="UniProtKB-UniRule"/>
</dbReference>
<dbReference type="GO" id="GO:0004087">
    <property type="term" value="F:carbamoyl-phosphate synthase (ammonia) activity"/>
    <property type="evidence" value="ECO:0007669"/>
    <property type="project" value="RHEA"/>
</dbReference>
<dbReference type="GO" id="GO:0004088">
    <property type="term" value="F:carbamoyl-phosphate synthase (glutamine-hydrolyzing) activity"/>
    <property type="evidence" value="ECO:0007669"/>
    <property type="project" value="UniProtKB-UniRule"/>
</dbReference>
<dbReference type="GO" id="GO:0046872">
    <property type="term" value="F:metal ion binding"/>
    <property type="evidence" value="ECO:0007669"/>
    <property type="project" value="UniProtKB-KW"/>
</dbReference>
<dbReference type="GO" id="GO:0044205">
    <property type="term" value="P:'de novo' UMP biosynthetic process"/>
    <property type="evidence" value="ECO:0007669"/>
    <property type="project" value="UniProtKB-UniRule"/>
</dbReference>
<dbReference type="GO" id="GO:0006541">
    <property type="term" value="P:glutamine metabolic process"/>
    <property type="evidence" value="ECO:0007669"/>
    <property type="project" value="TreeGrafter"/>
</dbReference>
<dbReference type="GO" id="GO:0006526">
    <property type="term" value="P:L-arginine biosynthetic process"/>
    <property type="evidence" value="ECO:0007669"/>
    <property type="project" value="UniProtKB-UniRule"/>
</dbReference>
<dbReference type="CDD" id="cd01424">
    <property type="entry name" value="MGS_CPS_II"/>
    <property type="match status" value="1"/>
</dbReference>
<dbReference type="FunFam" id="1.10.1030.10:FF:000002">
    <property type="entry name" value="Carbamoyl-phosphate synthase large chain"/>
    <property type="match status" value="1"/>
</dbReference>
<dbReference type="FunFam" id="3.30.470.20:FF:000001">
    <property type="entry name" value="Carbamoyl-phosphate synthase large chain"/>
    <property type="match status" value="1"/>
</dbReference>
<dbReference type="FunFam" id="3.30.470.20:FF:000026">
    <property type="entry name" value="Carbamoyl-phosphate synthase large chain"/>
    <property type="match status" value="1"/>
</dbReference>
<dbReference type="FunFam" id="3.40.50.20:FF:000001">
    <property type="entry name" value="Carbamoyl-phosphate synthase large chain"/>
    <property type="match status" value="1"/>
</dbReference>
<dbReference type="FunFam" id="3.40.50.20:FF:000002">
    <property type="entry name" value="Carbamoyl-phosphate synthase large chain"/>
    <property type="match status" value="1"/>
</dbReference>
<dbReference type="Gene3D" id="3.40.50.20">
    <property type="match status" value="2"/>
</dbReference>
<dbReference type="Gene3D" id="3.30.1490.20">
    <property type="entry name" value="ATP-grasp fold, A domain"/>
    <property type="match status" value="1"/>
</dbReference>
<dbReference type="Gene3D" id="3.30.470.20">
    <property type="entry name" value="ATP-grasp fold, B domain"/>
    <property type="match status" value="2"/>
</dbReference>
<dbReference type="Gene3D" id="1.10.1030.10">
    <property type="entry name" value="Carbamoyl-phosphate synthetase, large subunit oligomerisation domain"/>
    <property type="match status" value="1"/>
</dbReference>
<dbReference type="Gene3D" id="3.40.50.1380">
    <property type="entry name" value="Methylglyoxal synthase-like domain"/>
    <property type="match status" value="1"/>
</dbReference>
<dbReference type="HAMAP" id="MF_01210_A">
    <property type="entry name" value="CPSase_L_chain_A"/>
    <property type="match status" value="1"/>
</dbReference>
<dbReference type="HAMAP" id="MF_01210_B">
    <property type="entry name" value="CPSase_L_chain_B"/>
    <property type="match status" value="1"/>
</dbReference>
<dbReference type="InterPro" id="IPR011761">
    <property type="entry name" value="ATP-grasp"/>
</dbReference>
<dbReference type="InterPro" id="IPR013815">
    <property type="entry name" value="ATP_grasp_subdomain_1"/>
</dbReference>
<dbReference type="InterPro" id="IPR006275">
    <property type="entry name" value="CarbamoylP_synth_lsu"/>
</dbReference>
<dbReference type="InterPro" id="IPR005480">
    <property type="entry name" value="CarbamoylP_synth_lsu_oligo"/>
</dbReference>
<dbReference type="InterPro" id="IPR036897">
    <property type="entry name" value="CarbamoylP_synth_lsu_oligo_sf"/>
</dbReference>
<dbReference type="InterPro" id="IPR005479">
    <property type="entry name" value="CbamoylP_synth_lsu-like_ATP-bd"/>
</dbReference>
<dbReference type="InterPro" id="IPR005483">
    <property type="entry name" value="CbamoylP_synth_lsu_CPSase_dom"/>
</dbReference>
<dbReference type="InterPro" id="IPR011607">
    <property type="entry name" value="MGS-like_dom"/>
</dbReference>
<dbReference type="InterPro" id="IPR036914">
    <property type="entry name" value="MGS-like_dom_sf"/>
</dbReference>
<dbReference type="InterPro" id="IPR033937">
    <property type="entry name" value="MGS_CPS_CarB"/>
</dbReference>
<dbReference type="InterPro" id="IPR016185">
    <property type="entry name" value="PreATP-grasp_dom_sf"/>
</dbReference>
<dbReference type="NCBIfam" id="TIGR01369">
    <property type="entry name" value="CPSaseII_lrg"/>
    <property type="match status" value="1"/>
</dbReference>
<dbReference type="NCBIfam" id="NF003671">
    <property type="entry name" value="PRK05294.1"/>
    <property type="match status" value="1"/>
</dbReference>
<dbReference type="NCBIfam" id="NF009455">
    <property type="entry name" value="PRK12815.1"/>
    <property type="match status" value="1"/>
</dbReference>
<dbReference type="PANTHER" id="PTHR11405:SF53">
    <property type="entry name" value="CARBAMOYL-PHOSPHATE SYNTHASE [AMMONIA], MITOCHONDRIAL"/>
    <property type="match status" value="1"/>
</dbReference>
<dbReference type="PANTHER" id="PTHR11405">
    <property type="entry name" value="CARBAMOYLTRANSFERASE FAMILY MEMBER"/>
    <property type="match status" value="1"/>
</dbReference>
<dbReference type="Pfam" id="PF02786">
    <property type="entry name" value="CPSase_L_D2"/>
    <property type="match status" value="2"/>
</dbReference>
<dbReference type="Pfam" id="PF02787">
    <property type="entry name" value="CPSase_L_D3"/>
    <property type="match status" value="1"/>
</dbReference>
<dbReference type="Pfam" id="PF02142">
    <property type="entry name" value="MGS"/>
    <property type="match status" value="1"/>
</dbReference>
<dbReference type="PRINTS" id="PR00098">
    <property type="entry name" value="CPSASE"/>
</dbReference>
<dbReference type="SMART" id="SM01096">
    <property type="entry name" value="CPSase_L_D3"/>
    <property type="match status" value="1"/>
</dbReference>
<dbReference type="SMART" id="SM00851">
    <property type="entry name" value="MGS"/>
    <property type="match status" value="1"/>
</dbReference>
<dbReference type="SUPFAM" id="SSF48108">
    <property type="entry name" value="Carbamoyl phosphate synthetase, large subunit connection domain"/>
    <property type="match status" value="1"/>
</dbReference>
<dbReference type="SUPFAM" id="SSF56059">
    <property type="entry name" value="Glutathione synthetase ATP-binding domain-like"/>
    <property type="match status" value="2"/>
</dbReference>
<dbReference type="SUPFAM" id="SSF52335">
    <property type="entry name" value="Methylglyoxal synthase-like"/>
    <property type="match status" value="1"/>
</dbReference>
<dbReference type="SUPFAM" id="SSF52440">
    <property type="entry name" value="PreATP-grasp domain"/>
    <property type="match status" value="2"/>
</dbReference>
<dbReference type="PROSITE" id="PS50975">
    <property type="entry name" value="ATP_GRASP"/>
    <property type="match status" value="2"/>
</dbReference>
<dbReference type="PROSITE" id="PS00866">
    <property type="entry name" value="CPSASE_1"/>
    <property type="match status" value="1"/>
</dbReference>
<dbReference type="PROSITE" id="PS00867">
    <property type="entry name" value="CPSASE_2"/>
    <property type="match status" value="2"/>
</dbReference>
<dbReference type="PROSITE" id="PS51855">
    <property type="entry name" value="MGS"/>
    <property type="match status" value="1"/>
</dbReference>
<comment type="function">
    <text evidence="1">Large subunit of the glutamine-dependent carbamoyl phosphate synthetase (CPSase). CPSase catalyzes the formation of carbamoyl phosphate from the ammonia moiety of glutamine, carbonate, and phosphate donated by ATP, constituting the first step of 2 biosynthetic pathways, one leading to arginine and/or urea and the other to pyrimidine nucleotides. The large subunit (synthetase) binds the substrates ammonia (free or transferred from glutamine from the small subunit), hydrogencarbonate and ATP and carries out an ATP-coupled ligase reaction, activating hydrogencarbonate by forming carboxy phosphate which reacts with ammonia to form carbamoyl phosphate.</text>
</comment>
<comment type="catalytic activity">
    <reaction evidence="1">
        <text>hydrogencarbonate + L-glutamine + 2 ATP + H2O = carbamoyl phosphate + L-glutamate + 2 ADP + phosphate + 2 H(+)</text>
        <dbReference type="Rhea" id="RHEA:18633"/>
        <dbReference type="ChEBI" id="CHEBI:15377"/>
        <dbReference type="ChEBI" id="CHEBI:15378"/>
        <dbReference type="ChEBI" id="CHEBI:17544"/>
        <dbReference type="ChEBI" id="CHEBI:29985"/>
        <dbReference type="ChEBI" id="CHEBI:30616"/>
        <dbReference type="ChEBI" id="CHEBI:43474"/>
        <dbReference type="ChEBI" id="CHEBI:58228"/>
        <dbReference type="ChEBI" id="CHEBI:58359"/>
        <dbReference type="ChEBI" id="CHEBI:456216"/>
        <dbReference type="EC" id="6.3.5.5"/>
    </reaction>
</comment>
<comment type="catalytic activity">
    <molecule>Carbamoyl phosphate synthase large chain</molecule>
    <reaction evidence="1">
        <text>hydrogencarbonate + NH4(+) + 2 ATP = carbamoyl phosphate + 2 ADP + phosphate + 2 H(+)</text>
        <dbReference type="Rhea" id="RHEA:18029"/>
        <dbReference type="ChEBI" id="CHEBI:15378"/>
        <dbReference type="ChEBI" id="CHEBI:17544"/>
        <dbReference type="ChEBI" id="CHEBI:28938"/>
        <dbReference type="ChEBI" id="CHEBI:30616"/>
        <dbReference type="ChEBI" id="CHEBI:43474"/>
        <dbReference type="ChEBI" id="CHEBI:58228"/>
        <dbReference type="ChEBI" id="CHEBI:456216"/>
        <dbReference type="EC" id="6.3.4.16"/>
    </reaction>
</comment>
<comment type="cofactor">
    <cofactor evidence="1">
        <name>Mg(2+)</name>
        <dbReference type="ChEBI" id="CHEBI:18420"/>
    </cofactor>
    <cofactor evidence="1">
        <name>Mn(2+)</name>
        <dbReference type="ChEBI" id="CHEBI:29035"/>
    </cofactor>
    <text evidence="1">Binds 4 Mg(2+) or Mn(2+) ions per subunit.</text>
</comment>
<comment type="pathway">
    <text evidence="1">Amino-acid biosynthesis; L-arginine biosynthesis; carbamoyl phosphate from bicarbonate: step 1/1.</text>
</comment>
<comment type="pathway">
    <text evidence="1">Pyrimidine metabolism; UMP biosynthesis via de novo pathway; (S)-dihydroorotate from bicarbonate: step 1/3.</text>
</comment>
<comment type="subunit">
    <text evidence="1">Composed of two chains; the small (or glutamine) chain promotes the hydrolysis of glutamine to ammonia, which is used by the large (or ammonia) chain to synthesize carbamoyl phosphate. Tetramer of heterodimers (alpha,beta)4.</text>
</comment>
<comment type="domain">
    <text evidence="1">The large subunit is composed of 2 ATP-grasp domains that are involved in binding the 2 ATP molecules needed for carbamoyl phosphate synthesis. The N-terminal ATP-grasp domain (referred to as the carboxyphosphate synthetic component) catalyzes the ATP-dependent phosphorylation of hydrogencarbonate to carboxyphosphate and the subsequent nucleophilic attack by ammonia to form a carbamate intermediate. The C-terminal ATP-grasp domain (referred to as the carbamoyl phosphate synthetic component) then catalyzes the phosphorylation of carbamate with the second ATP to form the end product carbamoyl phosphate. The reactive and unstable enzyme intermediates are sequentially channeled from one active site to the next through the interior of the protein over a distance of at least 96 A.</text>
</comment>
<comment type="similarity">
    <text evidence="1">Belongs to the CarB family.</text>
</comment>
<proteinExistence type="inferred from homology"/>